<proteinExistence type="inferred from homology"/>
<name>PSAJ_SYNS9</name>
<dbReference type="EMBL" id="CP000097">
    <property type="protein sequence ID" value="ABB26686.1"/>
    <property type="molecule type" value="Genomic_DNA"/>
</dbReference>
<dbReference type="RefSeq" id="WP_009789189.1">
    <property type="nucleotide sequence ID" value="NC_007513.1"/>
</dbReference>
<dbReference type="SMR" id="Q3AWM2"/>
<dbReference type="STRING" id="316279.Syncc9902_1729"/>
<dbReference type="KEGG" id="sye:Syncc9902_1729"/>
<dbReference type="eggNOG" id="ENOG5033A5A">
    <property type="taxonomic scope" value="Bacteria"/>
</dbReference>
<dbReference type="HOGENOM" id="CLU_212133_1_1_3"/>
<dbReference type="OrthoDB" id="532702at2"/>
<dbReference type="Proteomes" id="UP000002712">
    <property type="component" value="Chromosome"/>
</dbReference>
<dbReference type="GO" id="GO:0009522">
    <property type="term" value="C:photosystem I"/>
    <property type="evidence" value="ECO:0007669"/>
    <property type="project" value="UniProtKB-KW"/>
</dbReference>
<dbReference type="GO" id="GO:0031676">
    <property type="term" value="C:plasma membrane-derived thylakoid membrane"/>
    <property type="evidence" value="ECO:0007669"/>
    <property type="project" value="UniProtKB-SubCell"/>
</dbReference>
<dbReference type="GO" id="GO:0015979">
    <property type="term" value="P:photosynthesis"/>
    <property type="evidence" value="ECO:0007669"/>
    <property type="project" value="UniProtKB-UniRule"/>
</dbReference>
<dbReference type="Gene3D" id="1.20.5.510">
    <property type="entry name" value="Single helix bin"/>
    <property type="match status" value="1"/>
</dbReference>
<dbReference type="HAMAP" id="MF_00522">
    <property type="entry name" value="PSI_PsaJ"/>
    <property type="match status" value="1"/>
</dbReference>
<dbReference type="InterPro" id="IPR002615">
    <property type="entry name" value="PSI_PsaJ"/>
</dbReference>
<dbReference type="InterPro" id="IPR036062">
    <property type="entry name" value="PSI_PsaJ_sf"/>
</dbReference>
<dbReference type="NCBIfam" id="NF002743">
    <property type="entry name" value="PRK02733.1"/>
    <property type="match status" value="1"/>
</dbReference>
<dbReference type="PANTHER" id="PTHR36082">
    <property type="match status" value="1"/>
</dbReference>
<dbReference type="PANTHER" id="PTHR36082:SF2">
    <property type="entry name" value="PHOTOSYSTEM I REACTION CENTER SUBUNIT IX"/>
    <property type="match status" value="1"/>
</dbReference>
<dbReference type="Pfam" id="PF01701">
    <property type="entry name" value="PSI_PsaJ"/>
    <property type="match status" value="1"/>
</dbReference>
<dbReference type="SUPFAM" id="SSF81544">
    <property type="entry name" value="Subunit IX of photosystem I reaction centre, PsaJ"/>
    <property type="match status" value="1"/>
</dbReference>
<feature type="chain" id="PRO_0000268763" description="Photosystem I reaction center subunit IX">
    <location>
        <begin position="1"/>
        <end position="38"/>
    </location>
</feature>
<feature type="transmembrane region" description="Helical" evidence="1">
    <location>
        <begin position="4"/>
        <end position="24"/>
    </location>
</feature>
<protein>
    <recommendedName>
        <fullName evidence="1">Photosystem I reaction center subunit IX</fullName>
    </recommendedName>
</protein>
<gene>
    <name evidence="1" type="primary">psaJ</name>
    <name type="ordered locus">Syncc9902_1729</name>
</gene>
<sequence>MKKFLTTAPVVAAIWFTATAGILIEWNRFFPDLLFHPM</sequence>
<comment type="function">
    <text evidence="1">May help in the organization of the PsaE and PsaF subunits.</text>
</comment>
<comment type="subcellular location">
    <subcellularLocation>
        <location evidence="1">Cellular thylakoid membrane</location>
        <topology evidence="1">Single-pass membrane protein</topology>
    </subcellularLocation>
</comment>
<comment type="similarity">
    <text evidence="1">Belongs to the PsaJ family.</text>
</comment>
<organism>
    <name type="scientific">Synechococcus sp. (strain CC9902)</name>
    <dbReference type="NCBI Taxonomy" id="316279"/>
    <lineage>
        <taxon>Bacteria</taxon>
        <taxon>Bacillati</taxon>
        <taxon>Cyanobacteriota</taxon>
        <taxon>Cyanophyceae</taxon>
        <taxon>Synechococcales</taxon>
        <taxon>Synechococcaceae</taxon>
        <taxon>Synechococcus</taxon>
    </lineage>
</organism>
<accession>Q3AWM2</accession>
<keyword id="KW-0472">Membrane</keyword>
<keyword id="KW-0602">Photosynthesis</keyword>
<keyword id="KW-0603">Photosystem I</keyword>
<keyword id="KW-1185">Reference proteome</keyword>
<keyword id="KW-0793">Thylakoid</keyword>
<keyword id="KW-0812">Transmembrane</keyword>
<keyword id="KW-1133">Transmembrane helix</keyword>
<reference key="1">
    <citation type="submission" date="2005-08" db="EMBL/GenBank/DDBJ databases">
        <title>Complete sequence of Synechococcus sp. CC9902.</title>
        <authorList>
            <person name="Copeland A."/>
            <person name="Lucas S."/>
            <person name="Lapidus A."/>
            <person name="Barry K."/>
            <person name="Detter J.C."/>
            <person name="Glavina T."/>
            <person name="Hammon N."/>
            <person name="Israni S."/>
            <person name="Pitluck S."/>
            <person name="Martinez M."/>
            <person name="Schmutz J."/>
            <person name="Larimer F."/>
            <person name="Land M."/>
            <person name="Kyrpides N."/>
            <person name="Ivanova N."/>
            <person name="Richardson P."/>
        </authorList>
    </citation>
    <scope>NUCLEOTIDE SEQUENCE [LARGE SCALE GENOMIC DNA]</scope>
    <source>
        <strain>CC9902</strain>
    </source>
</reference>
<evidence type="ECO:0000255" key="1">
    <source>
        <dbReference type="HAMAP-Rule" id="MF_00522"/>
    </source>
</evidence>